<keyword id="KW-0002">3D-structure</keyword>
<keyword id="KW-0025">Alternative splicing</keyword>
<keyword id="KW-0539">Nucleus</keyword>
<keyword id="KW-1267">Proteomics identification</keyword>
<keyword id="KW-1185">Reference proteome</keyword>
<keyword id="KW-0690">Ribosome biogenesis</keyword>
<organism>
    <name type="scientific">Homo sapiens</name>
    <name type="common">Human</name>
    <dbReference type="NCBI Taxonomy" id="9606"/>
    <lineage>
        <taxon>Eukaryota</taxon>
        <taxon>Metazoa</taxon>
        <taxon>Chordata</taxon>
        <taxon>Craniata</taxon>
        <taxon>Vertebrata</taxon>
        <taxon>Euteleostomi</taxon>
        <taxon>Mammalia</taxon>
        <taxon>Eutheria</taxon>
        <taxon>Euarchontoglires</taxon>
        <taxon>Primates</taxon>
        <taxon>Haplorrhini</taxon>
        <taxon>Catarrhini</taxon>
        <taxon>Hominidae</taxon>
        <taxon>Homo</taxon>
    </lineage>
</organism>
<feature type="chain" id="PRO_0000156438" description="RNA 3'-terminal phosphate cyclase-like protein">
    <location>
        <begin position="1"/>
        <end position="373"/>
    </location>
</feature>
<feature type="splice variant" id="VSP_056452" description="In isoform 2." evidence="4">
    <original>MATQAHSLS</original>
    <variation>MTSLTPGCR</variation>
    <location>
        <begin position="1"/>
        <end position="9"/>
    </location>
</feature>
<feature type="splice variant" id="VSP_056453" description="In isoform 2." evidence="4">
    <location>
        <begin position="10"/>
        <end position="195"/>
    </location>
</feature>
<feature type="sequence conflict" description="In Ref. 2; BAB14300." evidence="5" ref="2">
    <original>H</original>
    <variation>Y</variation>
    <location>
        <position position="6"/>
    </location>
</feature>
<feature type="sequence conflict" description="In Ref. 8; AAF29016." evidence="5" ref="8">
    <original>D</original>
    <variation>S</variation>
    <location>
        <position position="46"/>
    </location>
</feature>
<feature type="sequence conflict" description="In Ref. 8; AAF29016." evidence="5" ref="8">
    <original>A</original>
    <variation>S</variation>
    <location>
        <position position="49"/>
    </location>
</feature>
<feature type="sequence conflict" description="In Ref. 2; BAB14300." evidence="5" ref="2">
    <original>K</original>
    <variation>N</variation>
    <location>
        <position position="153"/>
    </location>
</feature>
<feature type="sequence conflict" description="In Ref. 1; CAB89811, 7; AAD32456 and 8; AAF29016." evidence="5" ref="1 7 8">
    <original>Q</original>
    <variation>R</variation>
    <location>
        <position position="310"/>
    </location>
</feature>
<evidence type="ECO:0000250" key="1">
    <source>
        <dbReference type="UniProtKB" id="Q08096"/>
    </source>
</evidence>
<evidence type="ECO:0000269" key="2">
    <source>
    </source>
</evidence>
<evidence type="ECO:0000269" key="3">
    <source>
    </source>
</evidence>
<evidence type="ECO:0000303" key="4">
    <source>
    </source>
</evidence>
<evidence type="ECO:0000305" key="5"/>
<evidence type="ECO:0000312" key="6">
    <source>
        <dbReference type="HGNC" id="HGNC:17687"/>
    </source>
</evidence>
<evidence type="ECO:0007744" key="7">
    <source>
        <dbReference type="PDB" id="7MQ8"/>
    </source>
</evidence>
<evidence type="ECO:0007744" key="8">
    <source>
        <dbReference type="PDB" id="7MQ9"/>
    </source>
</evidence>
<evidence type="ECO:0007744" key="9">
    <source>
        <dbReference type="PDB" id="7MQA"/>
    </source>
</evidence>
<reference key="1">
    <citation type="journal article" date="2000" name="EMBO J.">
        <title>Rcl1p, the yeast protein similar to the RNA 3'-phosphate cyclase, associates with U3 snoRNP and is required for 18S rRNA biogenesis.</title>
        <authorList>
            <person name="Billy E."/>
            <person name="Wegierski T."/>
            <person name="Nasr F."/>
            <person name="Filipowicz W."/>
        </authorList>
    </citation>
    <scope>NUCLEOTIDE SEQUENCE [MRNA] (ISOFORM 1)</scope>
</reference>
<reference key="2">
    <citation type="journal article" date="2004" name="Nat. Genet.">
        <title>Complete sequencing and characterization of 21,243 full-length human cDNAs.</title>
        <authorList>
            <person name="Ota T."/>
            <person name="Suzuki Y."/>
            <person name="Nishikawa T."/>
            <person name="Otsuki T."/>
            <person name="Sugiyama T."/>
            <person name="Irie R."/>
            <person name="Wakamatsu A."/>
            <person name="Hayashi K."/>
            <person name="Sato H."/>
            <person name="Nagai K."/>
            <person name="Kimura K."/>
            <person name="Makita H."/>
            <person name="Sekine M."/>
            <person name="Obayashi M."/>
            <person name="Nishi T."/>
            <person name="Shibahara T."/>
            <person name="Tanaka T."/>
            <person name="Ishii S."/>
            <person name="Yamamoto J."/>
            <person name="Saito K."/>
            <person name="Kawai Y."/>
            <person name="Isono Y."/>
            <person name="Nakamura Y."/>
            <person name="Nagahari K."/>
            <person name="Murakami K."/>
            <person name="Yasuda T."/>
            <person name="Iwayanagi T."/>
            <person name="Wagatsuma M."/>
            <person name="Shiratori A."/>
            <person name="Sudo H."/>
            <person name="Hosoiri T."/>
            <person name="Kaku Y."/>
            <person name="Kodaira H."/>
            <person name="Kondo H."/>
            <person name="Sugawara M."/>
            <person name="Takahashi M."/>
            <person name="Kanda K."/>
            <person name="Yokoi T."/>
            <person name="Furuya T."/>
            <person name="Kikkawa E."/>
            <person name="Omura Y."/>
            <person name="Abe K."/>
            <person name="Kamihara K."/>
            <person name="Katsuta N."/>
            <person name="Sato K."/>
            <person name="Tanikawa M."/>
            <person name="Yamazaki M."/>
            <person name="Ninomiya K."/>
            <person name="Ishibashi T."/>
            <person name="Yamashita H."/>
            <person name="Murakawa K."/>
            <person name="Fujimori K."/>
            <person name="Tanai H."/>
            <person name="Kimata M."/>
            <person name="Watanabe M."/>
            <person name="Hiraoka S."/>
            <person name="Chiba Y."/>
            <person name="Ishida S."/>
            <person name="Ono Y."/>
            <person name="Takiguchi S."/>
            <person name="Watanabe S."/>
            <person name="Yosida M."/>
            <person name="Hotuta T."/>
            <person name="Kusano J."/>
            <person name="Kanehori K."/>
            <person name="Takahashi-Fujii A."/>
            <person name="Hara H."/>
            <person name="Tanase T.-O."/>
            <person name="Nomura Y."/>
            <person name="Togiya S."/>
            <person name="Komai F."/>
            <person name="Hara R."/>
            <person name="Takeuchi K."/>
            <person name="Arita M."/>
            <person name="Imose N."/>
            <person name="Musashino K."/>
            <person name="Yuuki H."/>
            <person name="Oshima A."/>
            <person name="Sasaki N."/>
            <person name="Aotsuka S."/>
            <person name="Yoshikawa Y."/>
            <person name="Matsunawa H."/>
            <person name="Ichihara T."/>
            <person name="Shiohata N."/>
            <person name="Sano S."/>
            <person name="Moriya S."/>
            <person name="Momiyama H."/>
            <person name="Satoh N."/>
            <person name="Takami S."/>
            <person name="Terashima Y."/>
            <person name="Suzuki O."/>
            <person name="Nakagawa S."/>
            <person name="Senoh A."/>
            <person name="Mizoguchi H."/>
            <person name="Goto Y."/>
            <person name="Shimizu F."/>
            <person name="Wakebe H."/>
            <person name="Hishigaki H."/>
            <person name="Watanabe T."/>
            <person name="Sugiyama A."/>
            <person name="Takemoto M."/>
            <person name="Kawakami B."/>
            <person name="Yamazaki M."/>
            <person name="Watanabe K."/>
            <person name="Kumagai A."/>
            <person name="Itakura S."/>
            <person name="Fukuzumi Y."/>
            <person name="Fujimori Y."/>
            <person name="Komiyama M."/>
            <person name="Tashiro H."/>
            <person name="Tanigami A."/>
            <person name="Fujiwara T."/>
            <person name="Ono T."/>
            <person name="Yamada K."/>
            <person name="Fujii Y."/>
            <person name="Ozaki K."/>
            <person name="Hirao M."/>
            <person name="Ohmori Y."/>
            <person name="Kawabata A."/>
            <person name="Hikiji T."/>
            <person name="Kobatake N."/>
            <person name="Inagaki H."/>
            <person name="Ikema Y."/>
            <person name="Okamoto S."/>
            <person name="Okitani R."/>
            <person name="Kawakami T."/>
            <person name="Noguchi S."/>
            <person name="Itoh T."/>
            <person name="Shigeta K."/>
            <person name="Senba T."/>
            <person name="Matsumura K."/>
            <person name="Nakajima Y."/>
            <person name="Mizuno T."/>
            <person name="Morinaga M."/>
            <person name="Sasaki M."/>
            <person name="Togashi T."/>
            <person name="Oyama M."/>
            <person name="Hata H."/>
            <person name="Watanabe M."/>
            <person name="Komatsu T."/>
            <person name="Mizushima-Sugano J."/>
            <person name="Satoh T."/>
            <person name="Shirai Y."/>
            <person name="Takahashi Y."/>
            <person name="Nakagawa K."/>
            <person name="Okumura K."/>
            <person name="Nagase T."/>
            <person name="Nomura N."/>
            <person name="Kikuchi H."/>
            <person name="Masuho Y."/>
            <person name="Yamashita R."/>
            <person name="Nakai K."/>
            <person name="Yada T."/>
            <person name="Nakamura Y."/>
            <person name="Ohara O."/>
            <person name="Isogai T."/>
            <person name="Sugano S."/>
        </authorList>
    </citation>
    <scope>NUCLEOTIDE SEQUENCE [LARGE SCALE MRNA] (ISOFORM 1)</scope>
</reference>
<reference key="3">
    <citation type="journal article" date="2007" name="BMC Genomics">
        <title>The full-ORF clone resource of the German cDNA consortium.</title>
        <authorList>
            <person name="Bechtel S."/>
            <person name="Rosenfelder H."/>
            <person name="Duda A."/>
            <person name="Schmidt C.P."/>
            <person name="Ernst U."/>
            <person name="Wellenreuther R."/>
            <person name="Mehrle A."/>
            <person name="Schuster C."/>
            <person name="Bahr A."/>
            <person name="Bloecker H."/>
            <person name="Heubner D."/>
            <person name="Hoerlein A."/>
            <person name="Michel G."/>
            <person name="Wedler H."/>
            <person name="Koehrer K."/>
            <person name="Ottenwaelder B."/>
            <person name="Poustka A."/>
            <person name="Wiemann S."/>
            <person name="Schupp I."/>
        </authorList>
    </citation>
    <scope>NUCLEOTIDE SEQUENCE [LARGE SCALE MRNA] (ISOFORM 2)</scope>
    <source>
        <tissue>Seminoma</tissue>
    </source>
</reference>
<reference key="4">
    <citation type="journal article" date="2004" name="Nature">
        <title>DNA sequence and analysis of human chromosome 9.</title>
        <authorList>
            <person name="Humphray S.J."/>
            <person name="Oliver K."/>
            <person name="Hunt A.R."/>
            <person name="Plumb R.W."/>
            <person name="Loveland J.E."/>
            <person name="Howe K.L."/>
            <person name="Andrews T.D."/>
            <person name="Searle S."/>
            <person name="Hunt S.E."/>
            <person name="Scott C.E."/>
            <person name="Jones M.C."/>
            <person name="Ainscough R."/>
            <person name="Almeida J.P."/>
            <person name="Ambrose K.D."/>
            <person name="Ashwell R.I.S."/>
            <person name="Babbage A.K."/>
            <person name="Babbage S."/>
            <person name="Bagguley C.L."/>
            <person name="Bailey J."/>
            <person name="Banerjee R."/>
            <person name="Barker D.J."/>
            <person name="Barlow K.F."/>
            <person name="Bates K."/>
            <person name="Beasley H."/>
            <person name="Beasley O."/>
            <person name="Bird C.P."/>
            <person name="Bray-Allen S."/>
            <person name="Brown A.J."/>
            <person name="Brown J.Y."/>
            <person name="Burford D."/>
            <person name="Burrill W."/>
            <person name="Burton J."/>
            <person name="Carder C."/>
            <person name="Carter N.P."/>
            <person name="Chapman J.C."/>
            <person name="Chen Y."/>
            <person name="Clarke G."/>
            <person name="Clark S.Y."/>
            <person name="Clee C.M."/>
            <person name="Clegg S."/>
            <person name="Collier R.E."/>
            <person name="Corby N."/>
            <person name="Crosier M."/>
            <person name="Cummings A.T."/>
            <person name="Davies J."/>
            <person name="Dhami P."/>
            <person name="Dunn M."/>
            <person name="Dutta I."/>
            <person name="Dyer L.W."/>
            <person name="Earthrowl M.E."/>
            <person name="Faulkner L."/>
            <person name="Fleming C.J."/>
            <person name="Frankish A."/>
            <person name="Frankland J.A."/>
            <person name="French L."/>
            <person name="Fricker D.G."/>
            <person name="Garner P."/>
            <person name="Garnett J."/>
            <person name="Ghori J."/>
            <person name="Gilbert J.G.R."/>
            <person name="Glison C."/>
            <person name="Grafham D.V."/>
            <person name="Gribble S."/>
            <person name="Griffiths C."/>
            <person name="Griffiths-Jones S."/>
            <person name="Grocock R."/>
            <person name="Guy J."/>
            <person name="Hall R.E."/>
            <person name="Hammond S."/>
            <person name="Harley J.L."/>
            <person name="Harrison E.S.I."/>
            <person name="Hart E.A."/>
            <person name="Heath P.D."/>
            <person name="Henderson C.D."/>
            <person name="Hopkins B.L."/>
            <person name="Howard P.J."/>
            <person name="Howden P.J."/>
            <person name="Huckle E."/>
            <person name="Johnson C."/>
            <person name="Johnson D."/>
            <person name="Joy A.A."/>
            <person name="Kay M."/>
            <person name="Keenan S."/>
            <person name="Kershaw J.K."/>
            <person name="Kimberley A.M."/>
            <person name="King A."/>
            <person name="Knights A."/>
            <person name="Laird G.K."/>
            <person name="Langford C."/>
            <person name="Lawlor S."/>
            <person name="Leongamornlert D.A."/>
            <person name="Leversha M."/>
            <person name="Lloyd C."/>
            <person name="Lloyd D.M."/>
            <person name="Lovell J."/>
            <person name="Martin S."/>
            <person name="Mashreghi-Mohammadi M."/>
            <person name="Matthews L."/>
            <person name="McLaren S."/>
            <person name="McLay K.E."/>
            <person name="McMurray A."/>
            <person name="Milne S."/>
            <person name="Nickerson T."/>
            <person name="Nisbett J."/>
            <person name="Nordsiek G."/>
            <person name="Pearce A.V."/>
            <person name="Peck A.I."/>
            <person name="Porter K.M."/>
            <person name="Pandian R."/>
            <person name="Pelan S."/>
            <person name="Phillimore B."/>
            <person name="Povey S."/>
            <person name="Ramsey Y."/>
            <person name="Rand V."/>
            <person name="Scharfe M."/>
            <person name="Sehra H.K."/>
            <person name="Shownkeen R."/>
            <person name="Sims S.K."/>
            <person name="Skuce C.D."/>
            <person name="Smith M."/>
            <person name="Steward C.A."/>
            <person name="Swarbreck D."/>
            <person name="Sycamore N."/>
            <person name="Tester J."/>
            <person name="Thorpe A."/>
            <person name="Tracey A."/>
            <person name="Tromans A."/>
            <person name="Thomas D.W."/>
            <person name="Wall M."/>
            <person name="Wallis J.M."/>
            <person name="West A.P."/>
            <person name="Whitehead S.L."/>
            <person name="Willey D.L."/>
            <person name="Williams S.A."/>
            <person name="Wilming L."/>
            <person name="Wray P.W."/>
            <person name="Young L."/>
            <person name="Ashurst J.L."/>
            <person name="Coulson A."/>
            <person name="Blocker H."/>
            <person name="Durbin R.M."/>
            <person name="Sulston J.E."/>
            <person name="Hubbard T."/>
            <person name="Jackson M.J."/>
            <person name="Bentley D.R."/>
            <person name="Beck S."/>
            <person name="Rogers J."/>
            <person name="Dunham I."/>
        </authorList>
    </citation>
    <scope>NUCLEOTIDE SEQUENCE [LARGE SCALE GENOMIC DNA]</scope>
</reference>
<reference key="5">
    <citation type="submission" date="2005-09" db="EMBL/GenBank/DDBJ databases">
        <authorList>
            <person name="Mural R.J."/>
            <person name="Istrail S."/>
            <person name="Sutton G.G."/>
            <person name="Florea L."/>
            <person name="Halpern A.L."/>
            <person name="Mobarry C.M."/>
            <person name="Lippert R."/>
            <person name="Walenz B."/>
            <person name="Shatkay H."/>
            <person name="Dew I."/>
            <person name="Miller J.R."/>
            <person name="Flanigan M.J."/>
            <person name="Edwards N.J."/>
            <person name="Bolanos R."/>
            <person name="Fasulo D."/>
            <person name="Halldorsson B.V."/>
            <person name="Hannenhalli S."/>
            <person name="Turner R."/>
            <person name="Yooseph S."/>
            <person name="Lu F."/>
            <person name="Nusskern D.R."/>
            <person name="Shue B.C."/>
            <person name="Zheng X.H."/>
            <person name="Zhong F."/>
            <person name="Delcher A.L."/>
            <person name="Huson D.H."/>
            <person name="Kravitz S.A."/>
            <person name="Mouchard L."/>
            <person name="Reinert K."/>
            <person name="Remington K.A."/>
            <person name="Clark A.G."/>
            <person name="Waterman M.S."/>
            <person name="Eichler E.E."/>
            <person name="Adams M.D."/>
            <person name="Hunkapiller M.W."/>
            <person name="Myers E.W."/>
            <person name="Venter J.C."/>
        </authorList>
    </citation>
    <scope>NUCLEOTIDE SEQUENCE [LARGE SCALE GENOMIC DNA]</scope>
</reference>
<reference key="6">
    <citation type="journal article" date="2004" name="Genome Res.">
        <title>The status, quality, and expansion of the NIH full-length cDNA project: the Mammalian Gene Collection (MGC).</title>
        <authorList>
            <consortium name="The MGC Project Team"/>
        </authorList>
    </citation>
    <scope>NUCLEOTIDE SEQUENCE [LARGE SCALE MRNA] (ISOFORM 1)</scope>
    <source>
        <tissue>Eye</tissue>
    </source>
</reference>
<reference key="7">
    <citation type="journal article" date="2000" name="Genome Res.">
        <title>Cloning and functional analysis of cDNAs with open reading frames for 300 previously undefined genes expressed in CD34+ hematopoietic stem/progenitor cells.</title>
        <authorList>
            <person name="Zhang Q.-H."/>
            <person name="Ye M."/>
            <person name="Wu X.-Y."/>
            <person name="Ren S.-X."/>
            <person name="Zhao M."/>
            <person name="Zhao C.-J."/>
            <person name="Fu G."/>
            <person name="Shen Y."/>
            <person name="Fan H.-Y."/>
            <person name="Lu G."/>
            <person name="Zhong M."/>
            <person name="Xu X.-R."/>
            <person name="Han Z.-G."/>
            <person name="Zhang J.-W."/>
            <person name="Tao J."/>
            <person name="Huang Q.-H."/>
            <person name="Zhou J."/>
            <person name="Hu G.-X."/>
            <person name="Gu J."/>
            <person name="Chen S.-J."/>
            <person name="Chen Z."/>
        </authorList>
    </citation>
    <scope>NUCLEOTIDE SEQUENCE [LARGE SCALE MRNA] OF 8-373 (ISOFORM 1)</scope>
    <source>
        <tissue>Umbilical cord blood</tissue>
    </source>
</reference>
<reference key="8">
    <citation type="submission" date="1999-05" db="EMBL/GenBank/DDBJ databases">
        <title>Human partial CDS from CD34+ stem cells.</title>
        <authorList>
            <person name="Ye M."/>
            <person name="Zhang Q.-H."/>
            <person name="Zhou J."/>
            <person name="Shen Y."/>
            <person name="Wu X.-Y."/>
            <person name="Guan Z.Q."/>
            <person name="Wang L."/>
            <person name="Fan H.-Y."/>
            <person name="Mao Y.-F."/>
            <person name="Dai M."/>
            <person name="Huang Q.-H."/>
            <person name="Chen S.-J."/>
            <person name="Chen Z."/>
        </authorList>
    </citation>
    <scope>NUCLEOTIDE SEQUENCE [LARGE SCALE MRNA] OF 46-373 (ISOFORM 1)</scope>
    <source>
        <tissue>Umbilical cord blood</tissue>
    </source>
</reference>
<reference key="9">
    <citation type="journal article" date="2011" name="BMC Syst. Biol.">
        <title>Initial characterization of the human central proteome.</title>
        <authorList>
            <person name="Burkard T.R."/>
            <person name="Planyavsky M."/>
            <person name="Kaupe I."/>
            <person name="Breitwieser F.P."/>
            <person name="Buerckstuemmer T."/>
            <person name="Bennett K.L."/>
            <person name="Superti-Furga G."/>
            <person name="Colinge J."/>
        </authorList>
    </citation>
    <scope>IDENTIFICATION BY MASS SPECTROMETRY [LARGE SCALE ANALYSIS]</scope>
</reference>
<reference key="10">
    <citation type="journal article" date="2016" name="J. Genet. Genomics">
        <title>Interaction between Bms1 and Rcl1, two ribosome biogenesis factors, is evolutionally conserved in zebrafish and human.</title>
        <authorList>
            <person name="Wang Y."/>
            <person name="Zhu Q."/>
            <person name="Huang L."/>
            <person name="Zhu Y."/>
            <person name="Chen J."/>
            <person name="Peng J."/>
            <person name="Lo L.J."/>
        </authorList>
    </citation>
    <scope>INTERACTION WITH BMS1</scope>
    <scope>SUBCELLULAR LOCATION</scope>
</reference>
<reference evidence="7 8 9" key="11">
    <citation type="journal article" date="2021" name="Science">
        <title>Nucleolar maturation of the human small subunit processome.</title>
        <authorList>
            <person name="Singh S."/>
            <person name="Vanden Broeck A."/>
            <person name="Miller L."/>
            <person name="Chaker-Margot M."/>
            <person name="Klinge S."/>
        </authorList>
    </citation>
    <scope>STRUCTURE BY ELECTRON MICROSCOPY (2.70 ANGSTROMS)</scope>
    <scope>SUBUNIT</scope>
    <scope>SUBCELLULAR LOCATION</scope>
</reference>
<protein>
    <recommendedName>
        <fullName>RNA 3'-terminal phosphate cyclase-like protein</fullName>
    </recommendedName>
</protein>
<accession>Q9Y2P8</accession>
<accession>D3DRI2</accession>
<accession>Q5VYW9</accession>
<accession>Q5VZU1</accession>
<accession>Q9H9D0</accession>
<accession>Q9NY00</accession>
<accession>Q9P044</accession>
<name>RCL1_HUMAN</name>
<proteinExistence type="evidence at protein level"/>
<comment type="function">
    <text evidence="1">As part of the small subunit (SSU) processome, it plays a role in 40S-ribosomal-subunit biogenesis in the early pre-rRNA processing steps at sites A0, A1 and A2 that are required for proper maturation of the 18S RNA (By similarity). Activates BMS1 by promoting GDP/GTP exchange (By similarity). Does not have cyclase activity (By similarity).</text>
</comment>
<comment type="subunit">
    <text evidence="2 3">Part of the small subunit (SSU) processome, composed of more than 70 proteins and the RNA chaperone small nucleolar RNA (snoRNA) U3 (PubMed:34516797). Interacts with BMS1 (PubMed:27474224).</text>
</comment>
<comment type="interaction">
    <interactant intactId="EBI-11026509">
        <id>Q9Y2P8</id>
    </interactant>
    <interactant intactId="EBI-2513630">
        <id>Q14692</id>
        <label>BMS1</label>
    </interactant>
    <organismsDiffer>false</organismsDiffer>
    <experiments>3</experiments>
</comment>
<comment type="interaction">
    <interactant intactId="EBI-11026509">
        <id>Q9Y2P8</id>
    </interactant>
    <interactant intactId="EBI-618309">
        <id>Q08379</id>
        <label>GOLGA2</label>
    </interactant>
    <organismsDiffer>false</organismsDiffer>
    <experiments>3</experiments>
</comment>
<comment type="subcellular location">
    <subcellularLocation>
        <location evidence="2 3">Nucleus</location>
        <location evidence="2 3">Nucleolus</location>
    </subcellularLocation>
</comment>
<comment type="alternative products">
    <event type="alternative splicing"/>
    <isoform>
        <id>Q9Y2P8-1</id>
        <name>1</name>
        <sequence type="displayed"/>
    </isoform>
    <isoform>
        <id>Q9Y2P8-2</id>
        <name>2</name>
        <sequence type="described" ref="VSP_056452 VSP_056453"/>
    </isoform>
</comment>
<comment type="similarity">
    <text evidence="5">Belongs to the RNA 3'-terminal cyclase family. Type 2 subfamily.</text>
</comment>
<comment type="sequence caution" evidence="5">
    <conflict type="frameshift">
        <sequence resource="EMBL-CDS" id="AAD32456"/>
    </conflict>
</comment>
<gene>
    <name evidence="6" type="primary">RCL1</name>
    <name type="synonym">RNAC</name>
    <name type="synonym">RPC2</name>
    <name type="synonym">RPCL1</name>
    <name type="synonym">RTC2</name>
    <name type="ORF">HSPC338</name>
</gene>
<sequence length="373" mass="40843">MATQAHSLSYAGCNFLRQRLVLSTLSGRPVKIRKIRARDDNPGLRDFEASFIRLLDKITNGSRIEINQTGTTLYYQPGLLYGGSVEHDCSVLRGIGYYLESLLCLAPFMKHPLKIVLRGVTNDQVDPSVDVLKATALPLLKQFGIDGESFELKIVRRGMPPGGGGEVVFSCPVRKVLKPIQLTDPGKIKRIRGMAYSVRVSPQMANRIVDSARSILNKFIPDIYIYTDHMKGVNSGKSPGFGLSLVAETTSGTFLSAELASNPQGQGAAVLPEDLGRNCARLLLEEIYRGGCVDSTNQSLALLLMTLGQQDVSKVLLGPLSPYTIEFLRHLKSFFQIMFKIETKPCGEELKGGDKVLMTCVGIGFSNLSKTLK</sequence>
<dbReference type="EMBL" id="AJ276894">
    <property type="protein sequence ID" value="CAB89811.1"/>
    <property type="molecule type" value="mRNA"/>
</dbReference>
<dbReference type="EMBL" id="AK022904">
    <property type="protein sequence ID" value="BAB14300.1"/>
    <property type="molecule type" value="mRNA"/>
</dbReference>
<dbReference type="EMBL" id="EF553527">
    <property type="protein sequence ID" value="ABQ66271.1"/>
    <property type="molecule type" value="mRNA"/>
</dbReference>
<dbReference type="EMBL" id="AL158147">
    <property type="status" value="NOT_ANNOTATED_CDS"/>
    <property type="molecule type" value="Genomic_DNA"/>
</dbReference>
<dbReference type="EMBL" id="AL353151">
    <property type="status" value="NOT_ANNOTATED_CDS"/>
    <property type="molecule type" value="Genomic_DNA"/>
</dbReference>
<dbReference type="EMBL" id="CH471071">
    <property type="protein sequence ID" value="EAW58776.1"/>
    <property type="molecule type" value="Genomic_DNA"/>
</dbReference>
<dbReference type="EMBL" id="CH471071">
    <property type="protein sequence ID" value="EAW58777.1"/>
    <property type="molecule type" value="Genomic_DNA"/>
</dbReference>
<dbReference type="EMBL" id="BC001025">
    <property type="protein sequence ID" value="AAH01025.1"/>
    <property type="molecule type" value="mRNA"/>
</dbReference>
<dbReference type="EMBL" id="AF067172">
    <property type="protein sequence ID" value="AAD32456.1"/>
    <property type="status" value="ALT_FRAME"/>
    <property type="molecule type" value="mRNA"/>
</dbReference>
<dbReference type="EMBL" id="AF161456">
    <property type="protein sequence ID" value="AAF29016.1"/>
    <property type="molecule type" value="mRNA"/>
</dbReference>
<dbReference type="CCDS" id="CCDS6456.1">
    <molecule id="Q9Y2P8-1"/>
</dbReference>
<dbReference type="CCDS" id="CCDS69565.1">
    <molecule id="Q9Y2P8-2"/>
</dbReference>
<dbReference type="RefSeq" id="NP_001273628.1">
    <property type="nucleotide sequence ID" value="NM_001286699.1"/>
</dbReference>
<dbReference type="RefSeq" id="NP_001273629.1">
    <property type="nucleotide sequence ID" value="NM_001286700.1"/>
</dbReference>
<dbReference type="RefSeq" id="NP_001273630.1">
    <molecule id="Q9Y2P8-2"/>
    <property type="nucleotide sequence ID" value="NM_001286701.2"/>
</dbReference>
<dbReference type="RefSeq" id="NP_005763.3">
    <molecule id="Q9Y2P8-1"/>
    <property type="nucleotide sequence ID" value="NM_005772.4"/>
</dbReference>
<dbReference type="RefSeq" id="XP_011515975.1">
    <property type="nucleotide sequence ID" value="XM_011517673.2"/>
</dbReference>
<dbReference type="RefSeq" id="XP_016869665.1">
    <property type="nucleotide sequence ID" value="XM_017014176.1"/>
</dbReference>
<dbReference type="PDB" id="7MQ8">
    <property type="method" value="EM"/>
    <property type="resolution" value="3.60 A"/>
    <property type="chains" value="SH=1-373"/>
</dbReference>
<dbReference type="PDB" id="7MQ9">
    <property type="method" value="EM"/>
    <property type="resolution" value="3.87 A"/>
    <property type="chains" value="SH=1-373"/>
</dbReference>
<dbReference type="PDB" id="7MQA">
    <property type="method" value="EM"/>
    <property type="resolution" value="2.70 A"/>
    <property type="chains" value="SH=1-373"/>
</dbReference>
<dbReference type="PDBsum" id="7MQ8"/>
<dbReference type="PDBsum" id="7MQ9"/>
<dbReference type="PDBsum" id="7MQA"/>
<dbReference type="EMDB" id="EMD-23936"/>
<dbReference type="EMDB" id="EMD-23937"/>
<dbReference type="EMDB" id="EMD-23938"/>
<dbReference type="SMR" id="Q9Y2P8"/>
<dbReference type="BioGRID" id="115473">
    <property type="interactions" value="119"/>
</dbReference>
<dbReference type="ComplexPortal" id="CPX-2511">
    <property type="entry name" value="Small ribosomal subunit processome"/>
</dbReference>
<dbReference type="FunCoup" id="Q9Y2P8">
    <property type="interactions" value="1732"/>
</dbReference>
<dbReference type="IntAct" id="Q9Y2P8">
    <property type="interactions" value="44"/>
</dbReference>
<dbReference type="MINT" id="Q9Y2P8"/>
<dbReference type="STRING" id="9606.ENSP00000371169"/>
<dbReference type="GlyGen" id="Q9Y2P8">
    <property type="glycosylation" value="1 site, 1 O-linked glycan (1 site)"/>
</dbReference>
<dbReference type="iPTMnet" id="Q9Y2P8"/>
<dbReference type="PhosphoSitePlus" id="Q9Y2P8"/>
<dbReference type="SwissPalm" id="Q9Y2P8"/>
<dbReference type="BioMuta" id="RCL1"/>
<dbReference type="DMDM" id="90103518"/>
<dbReference type="jPOST" id="Q9Y2P8"/>
<dbReference type="MassIVE" id="Q9Y2P8"/>
<dbReference type="PaxDb" id="9606-ENSP00000371169"/>
<dbReference type="PeptideAtlas" id="Q9Y2P8"/>
<dbReference type="ProteomicsDB" id="65725"/>
<dbReference type="ProteomicsDB" id="85857">
    <molecule id="Q9Y2P8-1"/>
</dbReference>
<dbReference type="Pumba" id="Q9Y2P8"/>
<dbReference type="Antibodypedia" id="24072">
    <property type="antibodies" value="154 antibodies from 25 providers"/>
</dbReference>
<dbReference type="DNASU" id="10171"/>
<dbReference type="Ensembl" id="ENST00000381728.5">
    <molecule id="Q9Y2P8-2"/>
    <property type="protein sequence ID" value="ENSP00000371147.1"/>
    <property type="gene ID" value="ENSG00000120158.12"/>
</dbReference>
<dbReference type="Ensembl" id="ENST00000381730.5">
    <molecule id="Q9Y2P8-2"/>
    <property type="protein sequence ID" value="ENSP00000371149.1"/>
    <property type="gene ID" value="ENSG00000120158.12"/>
</dbReference>
<dbReference type="Ensembl" id="ENST00000381750.9">
    <molecule id="Q9Y2P8-1"/>
    <property type="protein sequence ID" value="ENSP00000371169.4"/>
    <property type="gene ID" value="ENSG00000120158.12"/>
</dbReference>
<dbReference type="Ensembl" id="ENST00000448872.6">
    <molecule id="Q9Y2P8-2"/>
    <property type="protein sequence ID" value="ENSP00000388096.2"/>
    <property type="gene ID" value="ENSG00000120158.12"/>
</dbReference>
<dbReference type="GeneID" id="10171"/>
<dbReference type="KEGG" id="hsa:10171"/>
<dbReference type="MANE-Select" id="ENST00000381750.9">
    <property type="protein sequence ID" value="ENSP00000371169.4"/>
    <property type="RefSeq nucleotide sequence ID" value="NM_005772.5"/>
    <property type="RefSeq protein sequence ID" value="NP_005763.3"/>
</dbReference>
<dbReference type="UCSC" id="uc003zis.4">
    <molecule id="Q9Y2P8-1"/>
    <property type="organism name" value="human"/>
</dbReference>
<dbReference type="AGR" id="HGNC:17687"/>
<dbReference type="CTD" id="10171"/>
<dbReference type="DisGeNET" id="10171"/>
<dbReference type="GeneCards" id="RCL1"/>
<dbReference type="HGNC" id="HGNC:17687">
    <property type="gene designation" value="RCL1"/>
</dbReference>
<dbReference type="HPA" id="ENSG00000120158">
    <property type="expression patterns" value="Tissue enhanced (liver)"/>
</dbReference>
<dbReference type="MalaCards" id="RCL1"/>
<dbReference type="MIM" id="611405">
    <property type="type" value="gene"/>
</dbReference>
<dbReference type="neXtProt" id="NX_Q9Y2P8"/>
<dbReference type="OpenTargets" id="ENSG00000120158"/>
<dbReference type="PharmGKB" id="PA134894364"/>
<dbReference type="VEuPathDB" id="HostDB:ENSG00000120158"/>
<dbReference type="eggNOG" id="KOG3980">
    <property type="taxonomic scope" value="Eukaryota"/>
</dbReference>
<dbReference type="GeneTree" id="ENSGT00530000063404"/>
<dbReference type="HOGENOM" id="CLU_027882_1_0_1"/>
<dbReference type="InParanoid" id="Q9Y2P8"/>
<dbReference type="OMA" id="YTDQNKG"/>
<dbReference type="OrthoDB" id="1911237at2759"/>
<dbReference type="PAN-GO" id="Q9Y2P8">
    <property type="GO annotations" value="3 GO annotations based on evolutionary models"/>
</dbReference>
<dbReference type="PhylomeDB" id="Q9Y2P8"/>
<dbReference type="TreeFam" id="TF300831"/>
<dbReference type="PathwayCommons" id="Q9Y2P8"/>
<dbReference type="Reactome" id="R-HSA-6790901">
    <property type="pathway name" value="rRNA modification in the nucleus and cytosol"/>
</dbReference>
<dbReference type="Reactome" id="R-HSA-6791226">
    <property type="pathway name" value="Major pathway of rRNA processing in the nucleolus and cytosol"/>
</dbReference>
<dbReference type="SignaLink" id="Q9Y2P8"/>
<dbReference type="BioGRID-ORCS" id="10171">
    <property type="hits" value="766 hits in 1162 CRISPR screens"/>
</dbReference>
<dbReference type="CD-CODE" id="91857CE7">
    <property type="entry name" value="Nucleolus"/>
</dbReference>
<dbReference type="ChiTaRS" id="RCL1">
    <property type="organism name" value="human"/>
</dbReference>
<dbReference type="GeneWiki" id="RCL1"/>
<dbReference type="GenomeRNAi" id="10171"/>
<dbReference type="Pharos" id="Q9Y2P8">
    <property type="development level" value="Tbio"/>
</dbReference>
<dbReference type="PRO" id="PR:Q9Y2P8"/>
<dbReference type="Proteomes" id="UP000005640">
    <property type="component" value="Chromosome 9"/>
</dbReference>
<dbReference type="RNAct" id="Q9Y2P8">
    <property type="molecule type" value="protein"/>
</dbReference>
<dbReference type="Bgee" id="ENSG00000120158">
    <property type="expression patterns" value="Expressed in buccal mucosa cell and 166 other cell types or tissues"/>
</dbReference>
<dbReference type="ExpressionAtlas" id="Q9Y2P8">
    <property type="expression patterns" value="baseline and differential"/>
</dbReference>
<dbReference type="GO" id="GO:0005730">
    <property type="term" value="C:nucleolus"/>
    <property type="evidence" value="ECO:0007669"/>
    <property type="project" value="UniProtKB-SubCell"/>
</dbReference>
<dbReference type="GO" id="GO:0005654">
    <property type="term" value="C:nucleoplasm"/>
    <property type="evidence" value="ECO:0000304"/>
    <property type="project" value="Reactome"/>
</dbReference>
<dbReference type="GO" id="GO:0032040">
    <property type="term" value="C:small-subunit processome"/>
    <property type="evidence" value="ECO:0000314"/>
    <property type="project" value="UniProtKB"/>
</dbReference>
<dbReference type="GO" id="GO:0004521">
    <property type="term" value="F:RNA endonuclease activity"/>
    <property type="evidence" value="ECO:0000318"/>
    <property type="project" value="GO_Central"/>
</dbReference>
<dbReference type="GO" id="GO:0000480">
    <property type="term" value="P:endonucleolytic cleavage in 5'-ETS of tricistronic rRNA transcript (SSU-rRNA, 5.8S rRNA, LSU-rRNA)"/>
    <property type="evidence" value="ECO:0007669"/>
    <property type="project" value="Ensembl"/>
</dbReference>
<dbReference type="GO" id="GO:0000447">
    <property type="term" value="P:endonucleolytic cleavage in ITS1 to separate SSU-rRNA from 5.8S rRNA and LSU-rRNA from tricistronic rRNA transcript (SSU-rRNA, 5.8S rRNA, LSU-rRNA)"/>
    <property type="evidence" value="ECO:0007669"/>
    <property type="project" value="Ensembl"/>
</dbReference>
<dbReference type="GO" id="GO:0000479">
    <property type="term" value="P:endonucleolytic cleavage of tricistronic rRNA transcript (SSU-rRNA, 5.8S rRNA, LSU-rRNA)"/>
    <property type="evidence" value="ECO:0000318"/>
    <property type="project" value="GO_Central"/>
</dbReference>
<dbReference type="GO" id="GO:0042274">
    <property type="term" value="P:ribosomal small subunit biogenesis"/>
    <property type="evidence" value="ECO:0000314"/>
    <property type="project" value="UniProtKB"/>
</dbReference>
<dbReference type="CDD" id="cd00875">
    <property type="entry name" value="RNA_Cyclase_Class_I"/>
    <property type="match status" value="1"/>
</dbReference>
<dbReference type="FunFam" id="3.30.360.20:FF:000001">
    <property type="entry name" value="RNA terminal phosphate cyclase-like 1"/>
    <property type="match status" value="1"/>
</dbReference>
<dbReference type="FunFam" id="3.65.10.20:FF:000001">
    <property type="entry name" value="RNA terminal phosphate cyclase-like 1"/>
    <property type="match status" value="1"/>
</dbReference>
<dbReference type="Gene3D" id="3.65.10.20">
    <property type="entry name" value="RNA 3'-terminal phosphate cyclase domain"/>
    <property type="match status" value="1"/>
</dbReference>
<dbReference type="Gene3D" id="3.30.360.20">
    <property type="entry name" value="RNA 3'-terminal phosphate cyclase, insert domain"/>
    <property type="match status" value="1"/>
</dbReference>
<dbReference type="InterPro" id="IPR013791">
    <property type="entry name" value="RNA3'-term_phos_cycl_insert"/>
</dbReference>
<dbReference type="InterPro" id="IPR023797">
    <property type="entry name" value="RNA3'_phos_cyclase_dom"/>
</dbReference>
<dbReference type="InterPro" id="IPR037136">
    <property type="entry name" value="RNA3'_phos_cyclase_dom_sf"/>
</dbReference>
<dbReference type="InterPro" id="IPR000228">
    <property type="entry name" value="RNA3'_term_phos_cyc"/>
</dbReference>
<dbReference type="InterPro" id="IPR016443">
    <property type="entry name" value="RNA3'_term_phos_cyc_type_2"/>
</dbReference>
<dbReference type="InterPro" id="IPR020719">
    <property type="entry name" value="RNA3'_term_phos_cycl-like_CS"/>
</dbReference>
<dbReference type="InterPro" id="IPR013792">
    <property type="entry name" value="RNA3'P_cycl/enolpyr_Trfase_a/b"/>
</dbReference>
<dbReference type="InterPro" id="IPR036553">
    <property type="entry name" value="RPTC_insert"/>
</dbReference>
<dbReference type="NCBIfam" id="TIGR03400">
    <property type="entry name" value="18S_RNA_Rcl1p"/>
    <property type="match status" value="1"/>
</dbReference>
<dbReference type="PANTHER" id="PTHR11096">
    <property type="entry name" value="RNA 3' TERMINAL PHOSPHATE CYCLASE"/>
    <property type="match status" value="1"/>
</dbReference>
<dbReference type="PANTHER" id="PTHR11096:SF1">
    <property type="entry name" value="RNA 3'-TERMINAL PHOSPHATE CYCLASE-LIKE PROTEIN"/>
    <property type="match status" value="1"/>
</dbReference>
<dbReference type="Pfam" id="PF01137">
    <property type="entry name" value="RTC"/>
    <property type="match status" value="1"/>
</dbReference>
<dbReference type="Pfam" id="PF05189">
    <property type="entry name" value="RTC_insert"/>
    <property type="match status" value="1"/>
</dbReference>
<dbReference type="PIRSF" id="PIRSF005378">
    <property type="entry name" value="RNA3'_term_phos_cycl_euk"/>
    <property type="match status" value="1"/>
</dbReference>
<dbReference type="SUPFAM" id="SSF55205">
    <property type="entry name" value="EPT/RTPC-like"/>
    <property type="match status" value="1"/>
</dbReference>
<dbReference type="PROSITE" id="PS01287">
    <property type="entry name" value="RTC"/>
    <property type="match status" value="1"/>
</dbReference>